<protein>
    <recommendedName>
        <fullName evidence="2">Protein kintoun</fullName>
    </recommendedName>
    <alternativeName>
        <fullName evidence="2">Dynein assembly factor 2, axonemal homolog</fullName>
    </alternativeName>
    <alternativeName>
        <fullName evidence="2">PP1-interacting protein 20</fullName>
    </alternativeName>
</protein>
<comment type="function">
    <text evidence="2">Required for cytoplasmic pre-assembly of axonemal dyneins, thereby playing a central role in motility in cilia and flagella. Involved in pre-assembly of dynein arm complexes in the cytoplasm before intraflagellar transport loads them for the ciliary compartment.</text>
</comment>
<comment type="subunit">
    <text evidence="2">Interacts with Pp1alpha-96A, Pp1-87B, Pp1-13C and flw.</text>
</comment>
<comment type="subcellular location">
    <subcellularLocation>
        <location evidence="2">Cytoplasm</location>
    </subcellularLocation>
</comment>
<comment type="similarity">
    <text evidence="2">Belongs to the PIH1 family. Kintoun subfamily.</text>
</comment>
<proteinExistence type="inferred from homology"/>
<evidence type="ECO:0000250" key="1">
    <source>
        <dbReference type="UniProtKB" id="Q0E9G3"/>
    </source>
</evidence>
<evidence type="ECO:0000255" key="2">
    <source>
        <dbReference type="HAMAP-Rule" id="MF_03069"/>
    </source>
</evidence>
<evidence type="ECO:0000256" key="3">
    <source>
        <dbReference type="SAM" id="MobiDB-lite"/>
    </source>
</evidence>
<feature type="chain" id="PRO_0000365806" description="Protein kintoun">
    <location>
        <begin position="1"/>
        <end position="893"/>
    </location>
</feature>
<feature type="region of interest" description="Disordered" evidence="3">
    <location>
        <begin position="211"/>
        <end position="243"/>
    </location>
</feature>
<feature type="region of interest" description="Disordered" evidence="3">
    <location>
        <begin position="372"/>
        <end position="395"/>
    </location>
</feature>
<feature type="region of interest" description="Disordered" evidence="3">
    <location>
        <begin position="587"/>
        <end position="719"/>
    </location>
</feature>
<feature type="region of interest" description="Disordered" evidence="3">
    <location>
        <begin position="781"/>
        <end position="821"/>
    </location>
</feature>
<feature type="region of interest" description="Disordered" evidence="3">
    <location>
        <begin position="834"/>
        <end position="893"/>
    </location>
</feature>
<feature type="compositionally biased region" description="Basic and acidic residues" evidence="3">
    <location>
        <begin position="214"/>
        <end position="232"/>
    </location>
</feature>
<feature type="compositionally biased region" description="Acidic residues" evidence="3">
    <location>
        <begin position="594"/>
        <end position="603"/>
    </location>
</feature>
<feature type="compositionally biased region" description="Basic residues" evidence="3">
    <location>
        <begin position="609"/>
        <end position="626"/>
    </location>
</feature>
<feature type="compositionally biased region" description="Low complexity" evidence="3">
    <location>
        <begin position="640"/>
        <end position="651"/>
    </location>
</feature>
<feature type="compositionally biased region" description="Polar residues" evidence="3">
    <location>
        <begin position="656"/>
        <end position="667"/>
    </location>
</feature>
<feature type="compositionally biased region" description="Polar residues" evidence="3">
    <location>
        <begin position="684"/>
        <end position="694"/>
    </location>
</feature>
<feature type="compositionally biased region" description="Low complexity" evidence="3">
    <location>
        <begin position="709"/>
        <end position="719"/>
    </location>
</feature>
<feature type="compositionally biased region" description="Basic residues" evidence="3">
    <location>
        <begin position="781"/>
        <end position="797"/>
    </location>
</feature>
<feature type="compositionally biased region" description="Low complexity" evidence="3">
    <location>
        <begin position="836"/>
        <end position="848"/>
    </location>
</feature>
<feature type="compositionally biased region" description="Basic and acidic residues" evidence="3">
    <location>
        <begin position="865"/>
        <end position="877"/>
    </location>
</feature>
<feature type="compositionally biased region" description="Acidic residues" evidence="3">
    <location>
        <begin position="884"/>
        <end position="893"/>
    </location>
</feature>
<feature type="modified residue" description="Phosphoserine" evidence="1">
    <location>
        <position position="377"/>
    </location>
</feature>
<feature type="modified residue" description="Phosphoserine" evidence="1">
    <location>
        <position position="801"/>
    </location>
</feature>
<name>KTU_DROGR</name>
<keyword id="KW-0963">Cytoplasm</keyword>
<keyword id="KW-0597">Phosphoprotein</keyword>
<keyword id="KW-1185">Reference proteome</keyword>
<accession>B4J4Y2</accession>
<reference key="1">
    <citation type="journal article" date="2007" name="Nature">
        <title>Evolution of genes and genomes on the Drosophila phylogeny.</title>
        <authorList>
            <consortium name="Drosophila 12 genomes consortium"/>
        </authorList>
    </citation>
    <scope>NUCLEOTIDE SEQUENCE [LARGE SCALE GENOMIC DNA]</scope>
    <source>
        <strain>Tucson 15287-2541.00</strain>
    </source>
</reference>
<gene>
    <name evidence="2" type="primary">Nop17l</name>
    <name evidence="2" type="synonym">Ppi20</name>
    <name type="ORF">GH21580</name>
</gene>
<organism>
    <name type="scientific">Drosophila grimshawi</name>
    <name type="common">Hawaiian fruit fly</name>
    <name type="synonym">Idiomyia grimshawi</name>
    <dbReference type="NCBI Taxonomy" id="7222"/>
    <lineage>
        <taxon>Eukaryota</taxon>
        <taxon>Metazoa</taxon>
        <taxon>Ecdysozoa</taxon>
        <taxon>Arthropoda</taxon>
        <taxon>Hexapoda</taxon>
        <taxon>Insecta</taxon>
        <taxon>Pterygota</taxon>
        <taxon>Neoptera</taxon>
        <taxon>Endopterygota</taxon>
        <taxon>Diptera</taxon>
        <taxon>Brachycera</taxon>
        <taxon>Muscomorpha</taxon>
        <taxon>Ephydroidea</taxon>
        <taxon>Drosophilidae</taxon>
        <taxon>Drosophila</taxon>
        <taxon>Hawaiian Drosophila</taxon>
    </lineage>
</organism>
<dbReference type="EMBL" id="CH916367">
    <property type="protein sequence ID" value="EDW01688.1"/>
    <property type="molecule type" value="Genomic_DNA"/>
</dbReference>
<dbReference type="SMR" id="B4J4Y2"/>
<dbReference type="FunCoup" id="B4J4Y2">
    <property type="interactions" value="378"/>
</dbReference>
<dbReference type="STRING" id="7222.B4J4Y2"/>
<dbReference type="EnsemblMetazoa" id="FBtr0156994">
    <property type="protein sequence ID" value="FBpp0155486"/>
    <property type="gene ID" value="FBgn0129041"/>
</dbReference>
<dbReference type="EnsemblMetazoa" id="FBtr0463518">
    <property type="protein sequence ID" value="FBpp0413840"/>
    <property type="gene ID" value="FBgn0129041"/>
</dbReference>
<dbReference type="EnsemblMetazoa" id="XM_001986785.2">
    <property type="protein sequence ID" value="XP_001986821.1"/>
    <property type="gene ID" value="LOC6559093"/>
</dbReference>
<dbReference type="EnsemblMetazoa" id="XM_032735399.2">
    <property type="protein sequence ID" value="XP_032591290.1"/>
    <property type="gene ID" value="LOC6559093"/>
</dbReference>
<dbReference type="GeneID" id="6559093"/>
<dbReference type="KEGG" id="dgr:6559093"/>
<dbReference type="eggNOG" id="KOG4356">
    <property type="taxonomic scope" value="Eukaryota"/>
</dbReference>
<dbReference type="HOGENOM" id="CLU_012715_0_0_1"/>
<dbReference type="InParanoid" id="B4J4Y2"/>
<dbReference type="OMA" id="CFLNISK"/>
<dbReference type="OrthoDB" id="546764at2759"/>
<dbReference type="PhylomeDB" id="B4J4Y2"/>
<dbReference type="Proteomes" id="UP000001070">
    <property type="component" value="Unassembled WGS sequence"/>
</dbReference>
<dbReference type="GO" id="GO:0005737">
    <property type="term" value="C:cytoplasm"/>
    <property type="evidence" value="ECO:0007669"/>
    <property type="project" value="UniProtKB-SubCell"/>
</dbReference>
<dbReference type="GO" id="GO:0008157">
    <property type="term" value="F:protein phosphatase 1 binding"/>
    <property type="evidence" value="ECO:0007669"/>
    <property type="project" value="EnsemblMetazoa"/>
</dbReference>
<dbReference type="GO" id="GO:0070286">
    <property type="term" value="P:axonemal dynein complex assembly"/>
    <property type="evidence" value="ECO:0007669"/>
    <property type="project" value="UniProtKB-UniRule"/>
</dbReference>
<dbReference type="GO" id="GO:0060285">
    <property type="term" value="P:cilium-dependent cell motility"/>
    <property type="evidence" value="ECO:0007669"/>
    <property type="project" value="UniProtKB-UniRule"/>
</dbReference>
<dbReference type="CDD" id="cd00298">
    <property type="entry name" value="ACD_sHsps_p23-like"/>
    <property type="match status" value="1"/>
</dbReference>
<dbReference type="HAMAP" id="MF_03069">
    <property type="entry name" value="Kintoun"/>
    <property type="match status" value="1"/>
</dbReference>
<dbReference type="InterPro" id="IPR034727">
    <property type="entry name" value="Kintoun"/>
</dbReference>
<dbReference type="InterPro" id="IPR050734">
    <property type="entry name" value="PIH1/Kintoun_subfamily"/>
</dbReference>
<dbReference type="InterPro" id="IPR012981">
    <property type="entry name" value="PIH1_N"/>
</dbReference>
<dbReference type="InterPro" id="IPR041442">
    <property type="entry name" value="PIH1D1/2/3_CS-like"/>
</dbReference>
<dbReference type="PANTHER" id="PTHR22997">
    <property type="entry name" value="PIH1 DOMAIN-CONTAINING PROTEIN 1"/>
    <property type="match status" value="1"/>
</dbReference>
<dbReference type="PANTHER" id="PTHR22997:SF3">
    <property type="entry name" value="PROTEIN KINTOUN"/>
    <property type="match status" value="1"/>
</dbReference>
<dbReference type="Pfam" id="PF08190">
    <property type="entry name" value="PIH1"/>
    <property type="match status" value="1"/>
</dbReference>
<dbReference type="Pfam" id="PF18201">
    <property type="entry name" value="PIH1_CS"/>
    <property type="match status" value="1"/>
</dbReference>
<sequence>MSATSTRNKHSKIHGNEKVDITKDEFARMRLALQDEEFRKLFFDYVDEIQDPENRKIYEQEITQLEKERGVDVTFIHPKPGFVVKTAIDGELKCFINICGSQIVERPNNEVAINSETGERGLTWSIPMAQAPARDDIDANKKLCKVFDVVFHPDALHLGTRNSQFRKCLIDTALDGVEREFNVNLDRANLKYPKLDYKGEPHATVIRKLSKNATAEEREPHPLEHTYPKKPEANAGKPKVLPMKKNVTSTPTFAVPKYSIKHSHDIDMAQYTDELDAKLQVTIPRALIVEIELPLLSSTADCQLDVTEKSVYLLSERSGAKYRLKLDLPYTVDDKSGNARFDTEHRRLCITLPVVRSSAREQRQMHDNVRILSREDSGVELNSNSESPAEDEEAGSEAIVELTTMQQTQTDNFDAFPPRQSFLKRDLHYQMVANFDCNIVENVMAFLLHVPNVQPDSMRTVIREGRSVHLQFASMGSGYYPTNYAFLVQLPDAADPQLHIDHVEPDASDDNVVLRLFMSESCMTLPSYLAGPDATDLTEYACFPPCKTNIEDENCDLELDKPLRISTYHNELNKSIEVTIIPQDISEQVHQEQQQEEEEEEEQHEQQQHQHKKGNKKQRKRNKKQRSLSESAFEDLKAEQQQQHQKQQQQQEKLPENSSPESLNAGSSEPVATLKLPQRKQRSFSECNDSSSVQRGILKRFSRYGPRPSISESSSSIDDCSSSYSCSVDAAGIGFSHSFGGIPEERVIADAELSESCKKTVRFNDHIMKKMFRLDSSILGQRKKNQKRRDCKLRAQQRRVSEGDSVDYEEVEHASNGQQTANKTAANAQYFKQPQNNNNRSYSKNNKNQSLHDSGLDLTNNNNHNNEEDTKRNEADAKNAMIFEMDDDDDEDM</sequence>